<organism>
    <name type="scientific">Staphylococcus aureus (strain COL)</name>
    <dbReference type="NCBI Taxonomy" id="93062"/>
    <lineage>
        <taxon>Bacteria</taxon>
        <taxon>Bacillati</taxon>
        <taxon>Bacillota</taxon>
        <taxon>Bacilli</taxon>
        <taxon>Bacillales</taxon>
        <taxon>Staphylococcaceae</taxon>
        <taxon>Staphylococcus</taxon>
    </lineage>
</organism>
<protein>
    <recommendedName>
        <fullName evidence="1">Heme oxygenase (staphylobilin-producing) 2</fullName>
        <ecNumber evidence="1">1.14.99.48</ecNumber>
    </recommendedName>
    <alternativeName>
        <fullName evidence="1">Heme-degrading monooxygenase 2</fullName>
    </alternativeName>
    <alternativeName>
        <fullName evidence="1">Iron-regulated surface determinant 2</fullName>
    </alternativeName>
    <alternativeName>
        <fullName evidence="1">Iron-responsive surface determinant 2</fullName>
    </alternativeName>
</protein>
<accession>Q5HJK5</accession>
<sequence length="108" mass="12791">MFMAENRLQLQKGSAEETIERFYNRQGIETIEGFQQMFVTKTLNTEDTDEVKILTIWESEDSFNNWLNSDVFKEAHKNVRLKSDDDGQQSPILSNKVFKYDIGYHYQK</sequence>
<gene>
    <name type="primary">isdI</name>
    <name type="ordered locus">SACOL0152</name>
</gene>
<comment type="function">
    <text evidence="1">Allows bacterial pathogens to use the host heme as an iron source. Catalyzes the oxidative degradation of the heme macrocyclic porphyrin ring to the oxo-bilirubin chromophore staphylobilin (a mixture of the linear tetrapyrroles 5-oxo-delta-bilirubin and 15-oxo-beta-bilirubin) in the presence of a suitable electron donor such as ascorbate or NADPH--cytochrome P450 reductase, with subsequent release of free iron.</text>
</comment>
<comment type="catalytic activity">
    <reaction evidence="1">
        <text>heme b + 5 AH2 + 4 O2 + 2 H(+) = delta-staphylobilin + Fe(2+) + formaldehyde + 5 A + 4 H2O</text>
        <dbReference type="Rhea" id="RHEA:37039"/>
        <dbReference type="ChEBI" id="CHEBI:13193"/>
        <dbReference type="ChEBI" id="CHEBI:15377"/>
        <dbReference type="ChEBI" id="CHEBI:15378"/>
        <dbReference type="ChEBI" id="CHEBI:15379"/>
        <dbReference type="ChEBI" id="CHEBI:16842"/>
        <dbReference type="ChEBI" id="CHEBI:17499"/>
        <dbReference type="ChEBI" id="CHEBI:29033"/>
        <dbReference type="ChEBI" id="CHEBI:60344"/>
        <dbReference type="ChEBI" id="CHEBI:74361"/>
        <dbReference type="EC" id="1.14.99.48"/>
    </reaction>
</comment>
<comment type="catalytic activity">
    <reaction evidence="1">
        <text>heme b + 5 AH2 + 4 O2 + 2 H(+) = beta-staphylobilin + Fe(2+) + formaldehyde + 5 A + 4 H2O</text>
        <dbReference type="Rhea" id="RHEA:37363"/>
        <dbReference type="ChEBI" id="CHEBI:13193"/>
        <dbReference type="ChEBI" id="CHEBI:15377"/>
        <dbReference type="ChEBI" id="CHEBI:15378"/>
        <dbReference type="ChEBI" id="CHEBI:15379"/>
        <dbReference type="ChEBI" id="CHEBI:16842"/>
        <dbReference type="ChEBI" id="CHEBI:17499"/>
        <dbReference type="ChEBI" id="CHEBI:29033"/>
        <dbReference type="ChEBI" id="CHEBI:60344"/>
        <dbReference type="ChEBI" id="CHEBI:74362"/>
        <dbReference type="EC" id="1.14.99.48"/>
    </reaction>
</comment>
<comment type="subunit">
    <text evidence="1">Homodimer.</text>
</comment>
<comment type="subcellular location">
    <subcellularLocation>
        <location evidence="1">Cytoplasm</location>
    </subcellularLocation>
</comment>
<comment type="similarity">
    <text evidence="1">Belongs to the antibiotic biosynthesis monooxygenase family. Heme-degrading monooxygenase IsdG subfamily.</text>
</comment>
<feature type="chain" id="PRO_0000270082" description="Heme oxygenase (staphylobilin-producing) 2">
    <location>
        <begin position="1"/>
        <end position="108"/>
    </location>
</feature>
<feature type="domain" description="ABM" evidence="1">
    <location>
        <begin position="2"/>
        <end position="93"/>
    </location>
</feature>
<feature type="binding site" evidence="1">
    <location>
        <position position="6"/>
    </location>
    <ligand>
        <name>Fe cation</name>
        <dbReference type="ChEBI" id="CHEBI:24875"/>
    </ligand>
</feature>
<feature type="binding site" evidence="1">
    <location>
        <begin position="21"/>
        <end position="28"/>
    </location>
    <ligand>
        <name>heme</name>
        <dbReference type="ChEBI" id="CHEBI:30413"/>
    </ligand>
</feature>
<feature type="binding site" description="axial binding residue" evidence="1">
    <location>
        <position position="76"/>
    </location>
    <ligand>
        <name>heme</name>
        <dbReference type="ChEBI" id="CHEBI:30413"/>
    </ligand>
    <ligandPart>
        <name>Fe</name>
        <dbReference type="ChEBI" id="CHEBI:18248"/>
    </ligandPart>
</feature>
<feature type="site" description="Transition state stabilizer" evidence="1">
    <location>
        <position position="66"/>
    </location>
</feature>
<evidence type="ECO:0000255" key="1">
    <source>
        <dbReference type="HAMAP-Rule" id="MF_01272"/>
    </source>
</evidence>
<name>HDOX2_STAAC</name>
<dbReference type="EC" id="1.14.99.48" evidence="1"/>
<dbReference type="EMBL" id="CP000046">
    <property type="protein sequence ID" value="AAW37449.1"/>
    <property type="molecule type" value="Genomic_DNA"/>
</dbReference>
<dbReference type="RefSeq" id="WP_000480603.1">
    <property type="nucleotide sequence ID" value="NZ_JBGOFO010000001.1"/>
</dbReference>
<dbReference type="SMR" id="Q5HJK5"/>
<dbReference type="KEGG" id="sac:SACOL0152"/>
<dbReference type="HOGENOM" id="CLU_141544_2_1_9"/>
<dbReference type="Proteomes" id="UP000000530">
    <property type="component" value="Chromosome"/>
</dbReference>
<dbReference type="GO" id="GO:0005737">
    <property type="term" value="C:cytoplasm"/>
    <property type="evidence" value="ECO:0007669"/>
    <property type="project" value="UniProtKB-SubCell"/>
</dbReference>
<dbReference type="GO" id="GO:0020037">
    <property type="term" value="F:heme binding"/>
    <property type="evidence" value="ECO:0007669"/>
    <property type="project" value="UniProtKB-UniRule"/>
</dbReference>
<dbReference type="GO" id="GO:0004392">
    <property type="term" value="F:heme oxygenase (decyclizing) activity"/>
    <property type="evidence" value="ECO:0007669"/>
    <property type="project" value="UniProtKB-UniRule"/>
</dbReference>
<dbReference type="GO" id="GO:0005506">
    <property type="term" value="F:iron ion binding"/>
    <property type="evidence" value="ECO:0007669"/>
    <property type="project" value="UniProtKB-UniRule"/>
</dbReference>
<dbReference type="GO" id="GO:0042167">
    <property type="term" value="P:heme catabolic process"/>
    <property type="evidence" value="ECO:0007669"/>
    <property type="project" value="UniProtKB-UniRule"/>
</dbReference>
<dbReference type="GO" id="GO:0033212">
    <property type="term" value="P:iron import into cell"/>
    <property type="evidence" value="ECO:0007669"/>
    <property type="project" value="InterPro"/>
</dbReference>
<dbReference type="Gene3D" id="3.30.70.100">
    <property type="match status" value="1"/>
</dbReference>
<dbReference type="HAMAP" id="MF_01272">
    <property type="entry name" value="Heme_degrading_monooxygenase"/>
    <property type="match status" value="1"/>
</dbReference>
<dbReference type="InterPro" id="IPR007138">
    <property type="entry name" value="ABM_dom"/>
</dbReference>
<dbReference type="InterPro" id="IPR011008">
    <property type="entry name" value="Dimeric_a/b-barrel"/>
</dbReference>
<dbReference type="InterPro" id="IPR050404">
    <property type="entry name" value="Heme-degrading_MO"/>
</dbReference>
<dbReference type="InterPro" id="IPR023953">
    <property type="entry name" value="IsdG"/>
</dbReference>
<dbReference type="NCBIfam" id="NF009838">
    <property type="entry name" value="PRK13313.1"/>
    <property type="match status" value="1"/>
</dbReference>
<dbReference type="PANTHER" id="PTHR34474:SF4">
    <property type="entry name" value="HEME OXYGENASE (STAPHYLOBILIN-PRODUCING) 1"/>
    <property type="match status" value="1"/>
</dbReference>
<dbReference type="PANTHER" id="PTHR34474">
    <property type="entry name" value="SIGNAL TRANSDUCTION PROTEIN TRAP"/>
    <property type="match status" value="1"/>
</dbReference>
<dbReference type="Pfam" id="PF03992">
    <property type="entry name" value="ABM"/>
    <property type="match status" value="1"/>
</dbReference>
<dbReference type="SUPFAM" id="SSF54909">
    <property type="entry name" value="Dimeric alpha+beta barrel"/>
    <property type="match status" value="1"/>
</dbReference>
<dbReference type="PROSITE" id="PS51725">
    <property type="entry name" value="ABM"/>
    <property type="match status" value="1"/>
</dbReference>
<keyword id="KW-0963">Cytoplasm</keyword>
<keyword id="KW-0349">Heme</keyword>
<keyword id="KW-0408">Iron</keyword>
<keyword id="KW-0479">Metal-binding</keyword>
<keyword id="KW-0503">Monooxygenase</keyword>
<keyword id="KW-0560">Oxidoreductase</keyword>
<proteinExistence type="inferred from homology"/>
<reference key="1">
    <citation type="journal article" date="2005" name="J. Bacteriol.">
        <title>Insights on evolution of virulence and resistance from the complete genome analysis of an early methicillin-resistant Staphylococcus aureus strain and a biofilm-producing methicillin-resistant Staphylococcus epidermidis strain.</title>
        <authorList>
            <person name="Gill S.R."/>
            <person name="Fouts D.E."/>
            <person name="Archer G.L."/>
            <person name="Mongodin E.F."/>
            <person name="DeBoy R.T."/>
            <person name="Ravel J."/>
            <person name="Paulsen I.T."/>
            <person name="Kolonay J.F."/>
            <person name="Brinkac L.M."/>
            <person name="Beanan M.J."/>
            <person name="Dodson R.J."/>
            <person name="Daugherty S.C."/>
            <person name="Madupu R."/>
            <person name="Angiuoli S.V."/>
            <person name="Durkin A.S."/>
            <person name="Haft D.H."/>
            <person name="Vamathevan J.J."/>
            <person name="Khouri H."/>
            <person name="Utterback T.R."/>
            <person name="Lee C."/>
            <person name="Dimitrov G."/>
            <person name="Jiang L."/>
            <person name="Qin H."/>
            <person name="Weidman J."/>
            <person name="Tran K."/>
            <person name="Kang K.H."/>
            <person name="Hance I.R."/>
            <person name="Nelson K.E."/>
            <person name="Fraser C.M."/>
        </authorList>
    </citation>
    <scope>NUCLEOTIDE SEQUENCE [LARGE SCALE GENOMIC DNA]</scope>
    <source>
        <strain>COL</strain>
    </source>
</reference>